<proteinExistence type="inferred from homology"/>
<dbReference type="EMBL" id="AY147532">
    <property type="protein sequence ID" value="AAN32229.1"/>
    <property type="molecule type" value="Genomic_DNA"/>
</dbReference>
<dbReference type="SMR" id="Q67HX5"/>
<dbReference type="GO" id="GO:0009535">
    <property type="term" value="C:chloroplast thylakoid membrane"/>
    <property type="evidence" value="ECO:0007669"/>
    <property type="project" value="UniProtKB-SubCell"/>
</dbReference>
<dbReference type="GO" id="GO:0009539">
    <property type="term" value="C:photosystem II reaction center"/>
    <property type="evidence" value="ECO:0007669"/>
    <property type="project" value="InterPro"/>
</dbReference>
<dbReference type="GO" id="GO:0015979">
    <property type="term" value="P:photosynthesis"/>
    <property type="evidence" value="ECO:0007669"/>
    <property type="project" value="UniProtKB-UniRule"/>
</dbReference>
<dbReference type="HAMAP" id="MF_00808">
    <property type="entry name" value="PSII_PsbT"/>
    <property type="match status" value="1"/>
</dbReference>
<dbReference type="InterPro" id="IPR001743">
    <property type="entry name" value="PSII_PsbT"/>
</dbReference>
<dbReference type="InterPro" id="IPR037268">
    <property type="entry name" value="PSII_PsbT_sf"/>
</dbReference>
<dbReference type="PANTHER" id="PTHR36411">
    <property type="match status" value="1"/>
</dbReference>
<dbReference type="PANTHER" id="PTHR36411:SF2">
    <property type="entry name" value="PHOTOSYSTEM II REACTION CENTER PROTEIN T"/>
    <property type="match status" value="1"/>
</dbReference>
<dbReference type="Pfam" id="PF01405">
    <property type="entry name" value="PsbT"/>
    <property type="match status" value="1"/>
</dbReference>
<dbReference type="SUPFAM" id="SSF161029">
    <property type="entry name" value="Photosystem II reaction center protein T, PsbT"/>
    <property type="match status" value="1"/>
</dbReference>
<keyword id="KW-0150">Chloroplast</keyword>
<keyword id="KW-0472">Membrane</keyword>
<keyword id="KW-0602">Photosynthesis</keyword>
<keyword id="KW-0604">Photosystem II</keyword>
<keyword id="KW-0934">Plastid</keyword>
<keyword id="KW-0793">Thylakoid</keyword>
<keyword id="KW-0812">Transmembrane</keyword>
<keyword id="KW-1133">Transmembrane helix</keyword>
<name>PSBT_PHOTN</name>
<protein>
    <recommendedName>
        <fullName evidence="1">Photosystem II reaction center protein T</fullName>
        <shortName evidence="1">PSII-T</shortName>
    </recommendedName>
</protein>
<feature type="chain" id="PRO_0000217966" description="Photosystem II reaction center protein T">
    <location>
        <begin position="1"/>
        <end position="33"/>
    </location>
</feature>
<feature type="transmembrane region" description="Helical" evidence="1">
    <location>
        <begin position="3"/>
        <end position="23"/>
    </location>
</feature>
<organism>
    <name type="scientific">Phormium tenax</name>
    <name type="common">New Zealand flax</name>
    <dbReference type="NCBI Taxonomy" id="51475"/>
    <lineage>
        <taxon>Eukaryota</taxon>
        <taxon>Viridiplantae</taxon>
        <taxon>Streptophyta</taxon>
        <taxon>Embryophyta</taxon>
        <taxon>Tracheophyta</taxon>
        <taxon>Spermatophyta</taxon>
        <taxon>Magnoliopsida</taxon>
        <taxon>Liliopsida</taxon>
        <taxon>Asparagales</taxon>
        <taxon>Asphodelaceae</taxon>
        <taxon>Hemerocallidoideae</taxon>
        <taxon>Phormium</taxon>
    </lineage>
</organism>
<evidence type="ECO:0000255" key="1">
    <source>
        <dbReference type="HAMAP-Rule" id="MF_00808"/>
    </source>
</evidence>
<reference key="1">
    <citation type="submission" date="2002-09" db="EMBL/GenBank/DDBJ databases">
        <title>Phylogenetic relationships among the major lineages of Asparagales based on a large chloroplast data set.</title>
        <authorList>
            <person name="McPherson M.A."/>
            <person name="Rai H.S."/>
            <person name="Wong W.A."/>
            <person name="Graham S.W."/>
        </authorList>
    </citation>
    <scope>NUCLEOTIDE SEQUENCE [GENOMIC DNA]</scope>
</reference>
<sequence>MEALVYTFLLVSTLGIIFFAIFFREPPKVPTKK</sequence>
<accession>Q67HX5</accession>
<comment type="function">
    <text evidence="1">Found at the monomer-monomer interface of the photosystem II (PS II) dimer, plays a role in assembly and dimerization of PSII. PSII is a light-driven water plastoquinone oxidoreductase, using light energy to abstract electrons from H(2)O, generating a proton gradient subsequently used for ATP formation.</text>
</comment>
<comment type="subunit">
    <text evidence="1">PSII is composed of 1 copy each of membrane proteins PsbA, PsbB, PsbC, PsbD, PsbE, PsbF, PsbH, PsbI, PsbJ, PsbK, PsbL, PsbM, PsbT, PsbY, PsbZ, Psb30/Ycf12, at least 3 peripheral proteins of the oxygen-evolving complex and a large number of cofactors. It forms dimeric complexes.</text>
</comment>
<comment type="subcellular location">
    <subcellularLocation>
        <location evidence="1">Plastid</location>
        <location evidence="1">Chloroplast thylakoid membrane</location>
        <topology evidence="1">Single-pass membrane protein</topology>
    </subcellularLocation>
</comment>
<comment type="similarity">
    <text evidence="1">Belongs to the PsbT family.</text>
</comment>
<geneLocation type="chloroplast"/>
<gene>
    <name evidence="1" type="primary">psbT</name>
</gene>